<proteinExistence type="inferred from homology"/>
<dbReference type="EC" id="2.1.1.144" evidence="1"/>
<dbReference type="EMBL" id="CP001001">
    <property type="protein sequence ID" value="ACB27277.1"/>
    <property type="molecule type" value="Genomic_DNA"/>
</dbReference>
<dbReference type="RefSeq" id="WP_012322221.1">
    <property type="nucleotide sequence ID" value="NC_010505.1"/>
</dbReference>
<dbReference type="SMR" id="B1LXF6"/>
<dbReference type="STRING" id="426355.Mrad2831_5330"/>
<dbReference type="GeneID" id="6141402"/>
<dbReference type="KEGG" id="mrd:Mrad2831_5330"/>
<dbReference type="eggNOG" id="COG4106">
    <property type="taxonomic scope" value="Bacteria"/>
</dbReference>
<dbReference type="HOGENOM" id="CLU_037990_5_2_5"/>
<dbReference type="OrthoDB" id="9795085at2"/>
<dbReference type="Proteomes" id="UP000006589">
    <property type="component" value="Chromosome"/>
</dbReference>
<dbReference type="GO" id="GO:0005737">
    <property type="term" value="C:cytoplasm"/>
    <property type="evidence" value="ECO:0007669"/>
    <property type="project" value="UniProtKB-SubCell"/>
</dbReference>
<dbReference type="GO" id="GO:0030798">
    <property type="term" value="F:trans-aconitate 2-methyltransferase activity"/>
    <property type="evidence" value="ECO:0007669"/>
    <property type="project" value="UniProtKB-UniRule"/>
</dbReference>
<dbReference type="GO" id="GO:0032259">
    <property type="term" value="P:methylation"/>
    <property type="evidence" value="ECO:0007669"/>
    <property type="project" value="UniProtKB-KW"/>
</dbReference>
<dbReference type="CDD" id="cd02440">
    <property type="entry name" value="AdoMet_MTases"/>
    <property type="match status" value="1"/>
</dbReference>
<dbReference type="Gene3D" id="1.10.150.290">
    <property type="entry name" value="S-adenosyl-L-methionine-dependent methyltransferases"/>
    <property type="match status" value="1"/>
</dbReference>
<dbReference type="Gene3D" id="3.40.50.150">
    <property type="entry name" value="Vaccinia Virus protein VP39"/>
    <property type="match status" value="1"/>
</dbReference>
<dbReference type="HAMAP" id="MF_00560">
    <property type="entry name" value="Tran_acon_Me_trans"/>
    <property type="match status" value="1"/>
</dbReference>
<dbReference type="InterPro" id="IPR013217">
    <property type="entry name" value="Methyltransf_12"/>
</dbReference>
<dbReference type="InterPro" id="IPR029063">
    <property type="entry name" value="SAM-dependent_MTases_sf"/>
</dbReference>
<dbReference type="InterPro" id="IPR023506">
    <property type="entry name" value="Trans-aconitate_MeTrfase"/>
</dbReference>
<dbReference type="InterPro" id="IPR023149">
    <property type="entry name" value="Trans_acon_MeTrfase_C"/>
</dbReference>
<dbReference type="NCBIfam" id="NF002463">
    <property type="entry name" value="PRK01683.1"/>
    <property type="match status" value="1"/>
</dbReference>
<dbReference type="PANTHER" id="PTHR43861:SF1">
    <property type="entry name" value="TRANS-ACONITATE 2-METHYLTRANSFERASE"/>
    <property type="match status" value="1"/>
</dbReference>
<dbReference type="PANTHER" id="PTHR43861">
    <property type="entry name" value="TRANS-ACONITATE 2-METHYLTRANSFERASE-RELATED"/>
    <property type="match status" value="1"/>
</dbReference>
<dbReference type="Pfam" id="PF08242">
    <property type="entry name" value="Methyltransf_12"/>
    <property type="match status" value="1"/>
</dbReference>
<dbReference type="SUPFAM" id="SSF53335">
    <property type="entry name" value="S-adenosyl-L-methionine-dependent methyltransferases"/>
    <property type="match status" value="1"/>
</dbReference>
<feature type="chain" id="PRO_1000129260" description="Trans-aconitate 2-methyltransferase">
    <location>
        <begin position="1"/>
        <end position="260"/>
    </location>
</feature>
<gene>
    <name evidence="1" type="primary">tam</name>
    <name type="ordered locus">Mrad2831_5330</name>
</gene>
<keyword id="KW-0963">Cytoplasm</keyword>
<keyword id="KW-0489">Methyltransferase</keyword>
<keyword id="KW-0949">S-adenosyl-L-methionine</keyword>
<keyword id="KW-0808">Transferase</keyword>
<name>TAM_METRJ</name>
<evidence type="ECO:0000255" key="1">
    <source>
        <dbReference type="HAMAP-Rule" id="MF_00560"/>
    </source>
</evidence>
<sequence>MADWNPALYTRFEDERTRPAAELLARVPLEAPRLAIDLGCGPGNSTALIAARFPDAEVIGLDTSPAMLESARARLPRLAFALADAATWTPERAPDLIYANAVLQWLPDHATLLPRLFGLLAPGGVLAVQMPDNLAEPTHRLMRAVAASGPWAAAIGDPAVAGRLGRMLEPAAYYDLLAPAAAEVDVWRTAYHHRMADAAAIVDWVRATGLRPFLDPLDPEHRAGFLDAYTRAIDGAYPPRSDGRRLLAFPRVFVVARKAS</sequence>
<reference key="1">
    <citation type="submission" date="2008-03" db="EMBL/GenBank/DDBJ databases">
        <title>Complete sequence of chromosome of Methylobacterium radiotolerans JCM 2831.</title>
        <authorList>
            <consortium name="US DOE Joint Genome Institute"/>
            <person name="Copeland A."/>
            <person name="Lucas S."/>
            <person name="Lapidus A."/>
            <person name="Glavina del Rio T."/>
            <person name="Dalin E."/>
            <person name="Tice H."/>
            <person name="Bruce D."/>
            <person name="Goodwin L."/>
            <person name="Pitluck S."/>
            <person name="Kiss H."/>
            <person name="Brettin T."/>
            <person name="Detter J.C."/>
            <person name="Han C."/>
            <person name="Kuske C.R."/>
            <person name="Schmutz J."/>
            <person name="Larimer F."/>
            <person name="Land M."/>
            <person name="Hauser L."/>
            <person name="Kyrpides N."/>
            <person name="Mikhailova N."/>
            <person name="Marx C.J."/>
            <person name="Richardson P."/>
        </authorList>
    </citation>
    <scope>NUCLEOTIDE SEQUENCE [LARGE SCALE GENOMIC DNA]</scope>
    <source>
        <strain>ATCC 27329 / DSM 1819 / JCM 2831 / NBRC 15690 / NCIMB 10815 / 0-1</strain>
    </source>
</reference>
<protein>
    <recommendedName>
        <fullName evidence="1">Trans-aconitate 2-methyltransferase</fullName>
        <ecNumber evidence="1">2.1.1.144</ecNumber>
    </recommendedName>
</protein>
<organism>
    <name type="scientific">Methylobacterium radiotolerans (strain ATCC 27329 / DSM 1819 / JCM 2831 / NBRC 15690 / NCIMB 10815 / 0-1)</name>
    <dbReference type="NCBI Taxonomy" id="426355"/>
    <lineage>
        <taxon>Bacteria</taxon>
        <taxon>Pseudomonadati</taxon>
        <taxon>Pseudomonadota</taxon>
        <taxon>Alphaproteobacteria</taxon>
        <taxon>Hyphomicrobiales</taxon>
        <taxon>Methylobacteriaceae</taxon>
        <taxon>Methylobacterium</taxon>
    </lineage>
</organism>
<comment type="function">
    <text evidence="1">Catalyzes the S-adenosylmethionine monomethyl esterification of trans-aconitate.</text>
</comment>
<comment type="catalytic activity">
    <reaction evidence="1">
        <text>trans-aconitate + S-adenosyl-L-methionine = (E)-3-(methoxycarbonyl)pent-2-enedioate + S-adenosyl-L-homocysteine</text>
        <dbReference type="Rhea" id="RHEA:14969"/>
        <dbReference type="ChEBI" id="CHEBI:15708"/>
        <dbReference type="ChEBI" id="CHEBI:57470"/>
        <dbReference type="ChEBI" id="CHEBI:57856"/>
        <dbReference type="ChEBI" id="CHEBI:59789"/>
        <dbReference type="EC" id="2.1.1.144"/>
    </reaction>
</comment>
<comment type="subcellular location">
    <subcellularLocation>
        <location evidence="1">Cytoplasm</location>
    </subcellularLocation>
</comment>
<comment type="similarity">
    <text evidence="1">Belongs to the methyltransferase superfamily. Tam family.</text>
</comment>
<accession>B1LXF6</accession>